<evidence type="ECO:0000250" key="1"/>
<evidence type="ECO:0000305" key="2"/>
<proteinExistence type="inferred from homology"/>
<feature type="chain" id="PRO_0000361218" description="Putative S-adenosyl-L-methionine-dependent methyltransferase Mmcs_1044">
    <location>
        <begin position="1"/>
        <end position="297"/>
    </location>
</feature>
<feature type="binding site" evidence="1">
    <location>
        <position position="124"/>
    </location>
    <ligand>
        <name>S-adenosyl-L-methionine</name>
        <dbReference type="ChEBI" id="CHEBI:59789"/>
    </ligand>
</feature>
<feature type="binding site" evidence="1">
    <location>
        <begin position="153"/>
        <end position="154"/>
    </location>
    <ligand>
        <name>S-adenosyl-L-methionine</name>
        <dbReference type="ChEBI" id="CHEBI:59789"/>
    </ligand>
</feature>
<reference key="1">
    <citation type="submission" date="2006-06" db="EMBL/GenBank/DDBJ databases">
        <title>Complete sequence of chromosome of Mycobacterium sp. MCS.</title>
        <authorList>
            <consortium name="US DOE Joint Genome Institute"/>
            <person name="Copeland A."/>
            <person name="Lucas S."/>
            <person name="Lapidus A."/>
            <person name="Barry K."/>
            <person name="Detter J.C."/>
            <person name="Glavina del Rio T."/>
            <person name="Hammon N."/>
            <person name="Israni S."/>
            <person name="Dalin E."/>
            <person name="Tice H."/>
            <person name="Pitluck S."/>
            <person name="Martinez M."/>
            <person name="Schmutz J."/>
            <person name="Larimer F."/>
            <person name="Land M."/>
            <person name="Hauser L."/>
            <person name="Kyrpides N."/>
            <person name="Kim E."/>
            <person name="Miller C.D."/>
            <person name="Hughes J.E."/>
            <person name="Anderson A.J."/>
            <person name="Sims R.C."/>
            <person name="Richardson P."/>
        </authorList>
    </citation>
    <scope>NUCLEOTIDE SEQUENCE [LARGE SCALE GENOMIC DNA]</scope>
    <source>
        <strain>MCS</strain>
    </source>
</reference>
<comment type="function">
    <text evidence="1">Exhibits S-adenosyl-L-methionine-dependent methyltransferase activity.</text>
</comment>
<comment type="similarity">
    <text evidence="2">Belongs to the UPF0677 family.</text>
</comment>
<name>Y1044_MYCSS</name>
<organism>
    <name type="scientific">Mycobacterium sp. (strain MCS)</name>
    <dbReference type="NCBI Taxonomy" id="164756"/>
    <lineage>
        <taxon>Bacteria</taxon>
        <taxon>Bacillati</taxon>
        <taxon>Actinomycetota</taxon>
        <taxon>Actinomycetes</taxon>
        <taxon>Mycobacteriales</taxon>
        <taxon>Mycobacteriaceae</taxon>
        <taxon>Mycobacterium</taxon>
    </lineage>
</organism>
<sequence length="297" mass="32725">MARSDEDTWDLASSVGATATMVAAARAVASRGPDTLIDDPYADALVRAVGVEYFVKLLDGEITLEADNAAMLAVMTDVMAVRTRFFDDFFLSSGLPQAVILASGLDARTYRLPWPSGSVVYEIDQPEVIEFKTRTLADLGASPAAELRTVAIDLRDDWPRALRDRGFDPTAPTAWIAEGLLIYLPPDAQDRLFDNITALSAPGSRLATEFHPDAGARIGASSQRMAEEWRRHGLDLDMADLFYDGERNPVVDYLRERGWEVEARSRPDMFAHYGRPFPTGEAVEALRQSLAVTATRR</sequence>
<accession>Q1BD76</accession>
<protein>
    <recommendedName>
        <fullName>Putative S-adenosyl-L-methionine-dependent methyltransferase Mmcs_1044</fullName>
        <ecNumber>2.1.1.-</ecNumber>
    </recommendedName>
</protein>
<dbReference type="EC" id="2.1.1.-"/>
<dbReference type="EMBL" id="CP000384">
    <property type="protein sequence ID" value="ABG07158.1"/>
    <property type="molecule type" value="Genomic_DNA"/>
</dbReference>
<dbReference type="SMR" id="Q1BD76"/>
<dbReference type="KEGG" id="mmc:Mmcs_1044"/>
<dbReference type="HOGENOM" id="CLU_056160_2_1_11"/>
<dbReference type="BioCyc" id="MSP164756:G1G6O-1069-MONOMER"/>
<dbReference type="GO" id="GO:0008168">
    <property type="term" value="F:methyltransferase activity"/>
    <property type="evidence" value="ECO:0007669"/>
    <property type="project" value="UniProtKB-KW"/>
</dbReference>
<dbReference type="GO" id="GO:0032259">
    <property type="term" value="P:methylation"/>
    <property type="evidence" value="ECO:0007669"/>
    <property type="project" value="UniProtKB-KW"/>
</dbReference>
<dbReference type="FunFam" id="3.40.50.150:FF:000152">
    <property type="entry name" value="S-adenosyl-L-methionine-dependent methyltransferase"/>
    <property type="match status" value="1"/>
</dbReference>
<dbReference type="Gene3D" id="3.40.50.150">
    <property type="entry name" value="Vaccinia Virus protein VP39"/>
    <property type="match status" value="1"/>
</dbReference>
<dbReference type="InterPro" id="IPR007213">
    <property type="entry name" value="Ppm1/Ppm2/Tcmp"/>
</dbReference>
<dbReference type="InterPro" id="IPR029063">
    <property type="entry name" value="SAM-dependent_MTases_sf"/>
</dbReference>
<dbReference type="InterPro" id="IPR011610">
    <property type="entry name" value="SAM_mthyl_Trfase_ML2640-like"/>
</dbReference>
<dbReference type="NCBIfam" id="TIGR00027">
    <property type="entry name" value="mthyl_TIGR00027"/>
    <property type="match status" value="1"/>
</dbReference>
<dbReference type="PANTHER" id="PTHR43619">
    <property type="entry name" value="S-ADENOSYL-L-METHIONINE-DEPENDENT METHYLTRANSFERASE YKTD-RELATED"/>
    <property type="match status" value="1"/>
</dbReference>
<dbReference type="PANTHER" id="PTHR43619:SF2">
    <property type="entry name" value="S-ADENOSYL-L-METHIONINE-DEPENDENT METHYLTRANSFERASES SUPERFAMILY PROTEIN"/>
    <property type="match status" value="1"/>
</dbReference>
<dbReference type="Pfam" id="PF04072">
    <property type="entry name" value="LCM"/>
    <property type="match status" value="1"/>
</dbReference>
<dbReference type="SUPFAM" id="SSF53335">
    <property type="entry name" value="S-adenosyl-L-methionine-dependent methyltransferases"/>
    <property type="match status" value="1"/>
</dbReference>
<gene>
    <name type="ordered locus">Mmcs_1044</name>
</gene>
<keyword id="KW-0489">Methyltransferase</keyword>
<keyword id="KW-0949">S-adenosyl-L-methionine</keyword>
<keyword id="KW-0808">Transferase</keyword>